<accession>Q3U1N2</accession>
<accession>Q925C2</accession>
<accession>Q9ESZ4</accession>
<sequence length="1130" mass="122911">MDESSELGVLETMETLTELGDELTLGDIDEMLQFVSNQVGEFPDLFSEQLCSSFPGGGSNGGSGNNSSGRGNNGGATDPAVQRSFSQVPLSTFSPSAASPQAPALQVKVSPTPPRATPVLQPRPQPQPQPPAQLQQQTVMITPTFSTAPQTRIIQQPLIYQNAATSFQVLQPQVQSLVTSPQVQPVTIQQQVQTVQAQRVLTQTANGTLQTLAPATVQTVAAPQVQQVPVLVQPQIIKTDSLVLTTLKTDGSPVMAAVQNPALTALTAPIQTAALQVPTLVGSNGTILTTMPVMMGQEKVPIKQVPGGVKQLDPPKEGERRTTHNIIEKRYRSSINDKIIELKDLVMGTDAKMHKSGVLRKAIDYIKYLQQVNHKLRQENMVLKLANQKNKLLKGIDLGSLVDSDVDLKIDDFNQNVLLMSPPASDSGSQAGFSPYSIDSEPGSPLLDDAKVKDEPDSPPVALGMVDRSRILLCVLTFLGLSFNPLTSLLQWGGAHNTDQHPYSGSGRSVLSLESGAGGWFDWMVPTLLLWLVNGVIVLSVFVKLLVHGEPVIRPHSRPSVTFWRHRKQADLDLAKGDFAAAAANLQTCLSVLGRALPTSRLDLACSLSWNVIRYSLQKLRLVRWLLKKVFQRWRATPATAAGFEDEAKSSARDAALAYHRLHQLHITGKLPAGSACSDVHMALCAVNLAECAEEKILPSTLIEIHLTAAMGLKTRCGGKLGFLASYFLNRAQSLCGPEHSTVPDSLRWLCHPLGQKFFMERSWSIKSAAKESLYCAQRSPADPIAQVHQAFCKNLLERAVESLVKPQAKKKAGDQEEESCEFSSALEYLKLLHSFVDSVGFVTSPFSSSSVLRSALGPDVICRWWTSAVTMAISWLQGDDAAVRSRFTEVERVPKALEVTESPLVKAVFYTCRAMHASLSGKADGQQNSFCHCERASGHLWSSLNVSGTTSDPSLNHVIQLFTCDLLLSLRTALWQKQASASQLLGETYHASGTELAGFQRDLGSLRRLAHSFRPAYRKVFLHEATVRLMAGASPTRTHQLLEHSLRRRPTQNTKHGEVDTWPGQRERATAILLACRHLPLSFLSSPGQRAVLLAEAARTLEKVGDRRSCSDCQQMIVKLGGGTAIAAS</sequence>
<protein>
    <recommendedName>
        <fullName evidence="18">Sterol regulatory element-binding protein 2</fullName>
        <shortName evidence="18">SREBP-2</shortName>
    </recommendedName>
    <alternativeName>
        <fullName evidence="18">Sterol regulatory element-binding transcription factor 2</fullName>
    </alternativeName>
    <component>
        <recommendedName>
            <fullName evidence="19">Processed sterol regulatory element-binding protein 2</fullName>
        </recommendedName>
        <alternativeName>
            <fullName evidence="19">Transcription factor SREBF2</fullName>
        </alternativeName>
    </component>
</protein>
<feature type="chain" id="PRO_0000317059" description="Sterol regulatory element-binding protein 2">
    <location>
        <begin position="1"/>
        <end position="1130"/>
    </location>
</feature>
<feature type="chain" id="PRO_0000317060" description="Processed sterol regulatory element-binding protein 2" evidence="2">
    <location>
        <begin position="1"/>
        <end position="473"/>
    </location>
</feature>
<feature type="topological domain" description="Cytoplasmic" evidence="3">
    <location>
        <begin position="1"/>
        <end position="470"/>
    </location>
</feature>
<feature type="transmembrane region" description="Helical" evidence="3">
    <location>
        <begin position="471"/>
        <end position="491"/>
    </location>
</feature>
<feature type="topological domain" description="Lumenal" evidence="3">
    <location>
        <begin position="492"/>
        <end position="522"/>
    </location>
</feature>
<feature type="transmembrane region" description="Helical" evidence="3">
    <location>
        <begin position="523"/>
        <end position="543"/>
    </location>
</feature>
<feature type="topological domain" description="Cytoplasmic" evidence="3">
    <location>
        <begin position="544"/>
        <end position="1130"/>
    </location>
</feature>
<feature type="domain" description="bHLH" evidence="4">
    <location>
        <begin position="319"/>
        <end position="369"/>
    </location>
</feature>
<feature type="region of interest" description="Transcriptional activation (acidic)" evidence="1 2">
    <location>
        <begin position="1"/>
        <end position="50"/>
    </location>
</feature>
<feature type="region of interest" description="Disordered" evidence="5">
    <location>
        <begin position="53"/>
        <end position="133"/>
    </location>
</feature>
<feature type="region of interest" description="Interaction with LMNA" evidence="8">
    <location>
        <begin position="226"/>
        <end position="480"/>
    </location>
</feature>
<feature type="region of interest" description="Leucine-zipper">
    <location>
        <begin position="369"/>
        <end position="390"/>
    </location>
</feature>
<feature type="compositionally biased region" description="Gly residues" evidence="5">
    <location>
        <begin position="55"/>
        <end position="64"/>
    </location>
</feature>
<feature type="compositionally biased region" description="Polar residues" evidence="5">
    <location>
        <begin position="83"/>
        <end position="93"/>
    </location>
</feature>
<feature type="compositionally biased region" description="Low complexity" evidence="5">
    <location>
        <begin position="94"/>
        <end position="104"/>
    </location>
</feature>
<feature type="compositionally biased region" description="Pro residues" evidence="5">
    <location>
        <begin position="111"/>
        <end position="131"/>
    </location>
</feature>
<feature type="site" description="Cleavage; by caspase-3 and caspase-7" evidence="2">
    <location>
        <begin position="457"/>
        <end position="458"/>
    </location>
</feature>
<feature type="site" description="Cleavage; by MBTPS2" evidence="2">
    <location>
        <begin position="473"/>
        <end position="474"/>
    </location>
</feature>
<feature type="site" description="Cleavage; by MBTPS1" evidence="2">
    <location>
        <begin position="511"/>
        <end position="512"/>
    </location>
</feature>
<feature type="modified residue" description="Phosphoserine" evidence="2">
    <location>
        <position position="1087"/>
    </location>
</feature>
<feature type="cross-link" description="Glycyl lysine isopeptide (Lys-Gly) (interchain with G-Cter in SUMO2)" evidence="2">
    <location>
        <position position="453"/>
    </location>
</feature>
<feature type="splice variant" id="VSP_052658" description="In isoform 2." evidence="16">
    <location>
        <begin position="57"/>
        <end position="96"/>
    </location>
</feature>
<feature type="splice variant" id="VSP_052659" description="In isoform 2." evidence="16">
    <original>VGDRRSCSDCQQMIVKLGGGTAIAAS</original>
    <variation>SCEDEGKTDCSELLPAKAFGSFRASRTMGRAP</variation>
    <location>
        <begin position="1105"/>
        <end position="1130"/>
    </location>
</feature>
<feature type="mutagenesis site" description="In L1.2.3A mutant; reduced affinity for importin-beta." evidence="7">
    <original>LQQVNHKLRQENMVL</original>
    <variation>AQQVNHKARQENMVA</variation>
    <location>
        <begin position="369"/>
        <end position="383"/>
    </location>
</feature>
<feature type="sequence conflict" description="In Ref. 3; AAK54763." evidence="19" ref="3">
    <original>S</original>
    <variation>F</variation>
    <location>
        <position position="334"/>
    </location>
</feature>
<feature type="sequence conflict" description="In Ref. 3; AAK54763." evidence="19" ref="3">
    <original>R</original>
    <variation>H</variation>
    <location>
        <position position="621"/>
    </location>
</feature>
<feature type="sequence conflict" description="In Ref. 3; AAK54763." evidence="19" ref="3">
    <original>L</original>
    <variation>P</variation>
    <location>
        <position position="698"/>
    </location>
</feature>
<feature type="sequence conflict" description="In Ref. 3; AAK54763." evidence="19" ref="3">
    <original>E</original>
    <variation>K</variation>
    <location>
        <position position="899"/>
    </location>
</feature>
<organism>
    <name type="scientific">Mus musculus</name>
    <name type="common">Mouse</name>
    <dbReference type="NCBI Taxonomy" id="10090"/>
    <lineage>
        <taxon>Eukaryota</taxon>
        <taxon>Metazoa</taxon>
        <taxon>Chordata</taxon>
        <taxon>Craniata</taxon>
        <taxon>Vertebrata</taxon>
        <taxon>Euteleostomi</taxon>
        <taxon>Mammalia</taxon>
        <taxon>Eutheria</taxon>
        <taxon>Euarchontoglires</taxon>
        <taxon>Glires</taxon>
        <taxon>Rodentia</taxon>
        <taxon>Myomorpha</taxon>
        <taxon>Muroidea</taxon>
        <taxon>Muridae</taxon>
        <taxon>Murinae</taxon>
        <taxon>Mus</taxon>
        <taxon>Mus</taxon>
    </lineage>
</organism>
<reference key="1">
    <citation type="journal article" date="2005" name="Science">
        <title>The transcriptional landscape of the mammalian genome.</title>
        <authorList>
            <person name="Carninci P."/>
            <person name="Kasukawa T."/>
            <person name="Katayama S."/>
            <person name="Gough J."/>
            <person name="Frith M.C."/>
            <person name="Maeda N."/>
            <person name="Oyama R."/>
            <person name="Ravasi T."/>
            <person name="Lenhard B."/>
            <person name="Wells C."/>
            <person name="Kodzius R."/>
            <person name="Shimokawa K."/>
            <person name="Bajic V.B."/>
            <person name="Brenner S.E."/>
            <person name="Batalov S."/>
            <person name="Forrest A.R."/>
            <person name="Zavolan M."/>
            <person name="Davis M.J."/>
            <person name="Wilming L.G."/>
            <person name="Aidinis V."/>
            <person name="Allen J.E."/>
            <person name="Ambesi-Impiombato A."/>
            <person name="Apweiler R."/>
            <person name="Aturaliya R.N."/>
            <person name="Bailey T.L."/>
            <person name="Bansal M."/>
            <person name="Baxter L."/>
            <person name="Beisel K.W."/>
            <person name="Bersano T."/>
            <person name="Bono H."/>
            <person name="Chalk A.M."/>
            <person name="Chiu K.P."/>
            <person name="Choudhary V."/>
            <person name="Christoffels A."/>
            <person name="Clutterbuck D.R."/>
            <person name="Crowe M.L."/>
            <person name="Dalla E."/>
            <person name="Dalrymple B.P."/>
            <person name="de Bono B."/>
            <person name="Della Gatta G."/>
            <person name="di Bernardo D."/>
            <person name="Down T."/>
            <person name="Engstrom P."/>
            <person name="Fagiolini M."/>
            <person name="Faulkner G."/>
            <person name="Fletcher C.F."/>
            <person name="Fukushima T."/>
            <person name="Furuno M."/>
            <person name="Futaki S."/>
            <person name="Gariboldi M."/>
            <person name="Georgii-Hemming P."/>
            <person name="Gingeras T.R."/>
            <person name="Gojobori T."/>
            <person name="Green R.E."/>
            <person name="Gustincich S."/>
            <person name="Harbers M."/>
            <person name="Hayashi Y."/>
            <person name="Hensch T.K."/>
            <person name="Hirokawa N."/>
            <person name="Hill D."/>
            <person name="Huminiecki L."/>
            <person name="Iacono M."/>
            <person name="Ikeo K."/>
            <person name="Iwama A."/>
            <person name="Ishikawa T."/>
            <person name="Jakt M."/>
            <person name="Kanapin A."/>
            <person name="Katoh M."/>
            <person name="Kawasawa Y."/>
            <person name="Kelso J."/>
            <person name="Kitamura H."/>
            <person name="Kitano H."/>
            <person name="Kollias G."/>
            <person name="Krishnan S.P."/>
            <person name="Kruger A."/>
            <person name="Kummerfeld S.K."/>
            <person name="Kurochkin I.V."/>
            <person name="Lareau L.F."/>
            <person name="Lazarevic D."/>
            <person name="Lipovich L."/>
            <person name="Liu J."/>
            <person name="Liuni S."/>
            <person name="McWilliam S."/>
            <person name="Madan Babu M."/>
            <person name="Madera M."/>
            <person name="Marchionni L."/>
            <person name="Matsuda H."/>
            <person name="Matsuzawa S."/>
            <person name="Miki H."/>
            <person name="Mignone F."/>
            <person name="Miyake S."/>
            <person name="Morris K."/>
            <person name="Mottagui-Tabar S."/>
            <person name="Mulder N."/>
            <person name="Nakano N."/>
            <person name="Nakauchi H."/>
            <person name="Ng P."/>
            <person name="Nilsson R."/>
            <person name="Nishiguchi S."/>
            <person name="Nishikawa S."/>
            <person name="Nori F."/>
            <person name="Ohara O."/>
            <person name="Okazaki Y."/>
            <person name="Orlando V."/>
            <person name="Pang K.C."/>
            <person name="Pavan W.J."/>
            <person name="Pavesi G."/>
            <person name="Pesole G."/>
            <person name="Petrovsky N."/>
            <person name="Piazza S."/>
            <person name="Reed J."/>
            <person name="Reid J.F."/>
            <person name="Ring B.Z."/>
            <person name="Ringwald M."/>
            <person name="Rost B."/>
            <person name="Ruan Y."/>
            <person name="Salzberg S.L."/>
            <person name="Sandelin A."/>
            <person name="Schneider C."/>
            <person name="Schoenbach C."/>
            <person name="Sekiguchi K."/>
            <person name="Semple C.A."/>
            <person name="Seno S."/>
            <person name="Sessa L."/>
            <person name="Sheng Y."/>
            <person name="Shibata Y."/>
            <person name="Shimada H."/>
            <person name="Shimada K."/>
            <person name="Silva D."/>
            <person name="Sinclair B."/>
            <person name="Sperling S."/>
            <person name="Stupka E."/>
            <person name="Sugiura K."/>
            <person name="Sultana R."/>
            <person name="Takenaka Y."/>
            <person name="Taki K."/>
            <person name="Tammoja K."/>
            <person name="Tan S.L."/>
            <person name="Tang S."/>
            <person name="Taylor M.S."/>
            <person name="Tegner J."/>
            <person name="Teichmann S.A."/>
            <person name="Ueda H.R."/>
            <person name="van Nimwegen E."/>
            <person name="Verardo R."/>
            <person name="Wei C.L."/>
            <person name="Yagi K."/>
            <person name="Yamanishi H."/>
            <person name="Zabarovsky E."/>
            <person name="Zhu S."/>
            <person name="Zimmer A."/>
            <person name="Hide W."/>
            <person name="Bult C."/>
            <person name="Grimmond S.M."/>
            <person name="Teasdale R.D."/>
            <person name="Liu E.T."/>
            <person name="Brusic V."/>
            <person name="Quackenbush J."/>
            <person name="Wahlestedt C."/>
            <person name="Mattick J.S."/>
            <person name="Hume D.A."/>
            <person name="Kai C."/>
            <person name="Sasaki D."/>
            <person name="Tomaru Y."/>
            <person name="Fukuda S."/>
            <person name="Kanamori-Katayama M."/>
            <person name="Suzuki M."/>
            <person name="Aoki J."/>
            <person name="Arakawa T."/>
            <person name="Iida J."/>
            <person name="Imamura K."/>
            <person name="Itoh M."/>
            <person name="Kato T."/>
            <person name="Kawaji H."/>
            <person name="Kawagashira N."/>
            <person name="Kawashima T."/>
            <person name="Kojima M."/>
            <person name="Kondo S."/>
            <person name="Konno H."/>
            <person name="Nakano K."/>
            <person name="Ninomiya N."/>
            <person name="Nishio T."/>
            <person name="Okada M."/>
            <person name="Plessy C."/>
            <person name="Shibata K."/>
            <person name="Shiraki T."/>
            <person name="Suzuki S."/>
            <person name="Tagami M."/>
            <person name="Waki K."/>
            <person name="Watahiki A."/>
            <person name="Okamura-Oho Y."/>
            <person name="Suzuki H."/>
            <person name="Kawai J."/>
            <person name="Hayashizaki Y."/>
        </authorList>
    </citation>
    <scope>NUCLEOTIDE SEQUENCE [LARGE SCALE MRNA] (ISOFORM 2)</scope>
    <source>
        <strain evidence="20">C57BL/6J</strain>
        <tissue>Dendritic cell</tissue>
    </source>
</reference>
<reference key="2">
    <citation type="journal article" date="2009" name="PLoS Biol.">
        <title>Lineage-specific biology revealed by a finished genome assembly of the mouse.</title>
        <authorList>
            <person name="Church D.M."/>
            <person name="Goodstadt L."/>
            <person name="Hillier L.W."/>
            <person name="Zody M.C."/>
            <person name="Goldstein S."/>
            <person name="She X."/>
            <person name="Bult C.J."/>
            <person name="Agarwala R."/>
            <person name="Cherry J.L."/>
            <person name="DiCuccio M."/>
            <person name="Hlavina W."/>
            <person name="Kapustin Y."/>
            <person name="Meric P."/>
            <person name="Maglott D."/>
            <person name="Birtle Z."/>
            <person name="Marques A.C."/>
            <person name="Graves T."/>
            <person name="Zhou S."/>
            <person name="Teague B."/>
            <person name="Potamousis K."/>
            <person name="Churas C."/>
            <person name="Place M."/>
            <person name="Herschleb J."/>
            <person name="Runnheim R."/>
            <person name="Forrest D."/>
            <person name="Amos-Landgraf J."/>
            <person name="Schwartz D.C."/>
            <person name="Cheng Z."/>
            <person name="Lindblad-Toh K."/>
            <person name="Eichler E.E."/>
            <person name="Ponting C.P."/>
        </authorList>
    </citation>
    <scope>NUCLEOTIDE SEQUENCE [LARGE SCALE GENOMIC DNA]</scope>
    <source>
        <strain>C57BL/6J</strain>
    </source>
</reference>
<reference key="3">
    <citation type="journal article" date="2002" name="Hum. Mol. Genet.">
        <title>A novel interaction between lamin A and SREBP1: implications for partial lipodystrophy and other laminopathies.</title>
        <authorList>
            <person name="Lloyd D.J."/>
            <person name="Trembath R.C."/>
            <person name="Shackleton S."/>
        </authorList>
    </citation>
    <scope>NUCLEOTIDE SEQUENCE [MRNA] OF 6-1096 (ISOFORM 1)</scope>
    <scope>INTERACTION WITH LMNA</scope>
    <source>
        <strain evidence="8">Swiss albino</strain>
        <tissue evidence="8">Adipocyte</tissue>
    </source>
</reference>
<reference key="4">
    <citation type="journal article" date="2003" name="Biochim. Biophys. Acta">
        <title>Acetyl-CoA carboxylase and SREBP expression during peripheral nervous system myelination.</title>
        <authorList>
            <person name="Salles J."/>
            <person name="Sargueil F."/>
            <person name="Knoll-Gellida A."/>
            <person name="Witters L.A."/>
            <person name="Cassagne C."/>
            <person name="Garbay B."/>
        </authorList>
    </citation>
    <scope>NUCLEOTIDE SEQUENCE [MRNA] OF 141-392</scope>
</reference>
<reference key="5">
    <citation type="journal article" date="1998" name="J. Clin. Invest.">
        <title>Activation of cholesterol synthesis in preference to fatty acid synthesis in liver and adipose tissue of transgenic mice overproducing sterol regulatory element-binding protein-2.</title>
        <authorList>
            <person name="Horton J.D."/>
            <person name="Shimomura I."/>
            <person name="Brown M.S."/>
            <person name="Hammer R.E."/>
            <person name="Goldstein J.L."/>
            <person name="Shimano H."/>
        </authorList>
    </citation>
    <scope>FUNCTION</scope>
</reference>
<reference key="6">
    <citation type="journal article" date="1999" name="Mol. Biol. Cell">
        <title>Nuclear import of sterol regulatory element-binding protein-2, a basic helix-loop-helix-leucine zipper (bHLH-Zip)-containing transcription factor, occurs through the direct interaction of importin beta with HLH-Zip.</title>
        <authorList>
            <person name="Nagoshi E."/>
            <person name="Imamoto N."/>
            <person name="Sato R."/>
            <person name="Yoneda Y."/>
        </authorList>
    </citation>
    <scope>SUBCELLULAR LOCATION</scope>
</reference>
<reference key="7">
    <citation type="journal article" date="2001" name="Mol. Cell. Biol.">
        <title>Dimerization of sterol regulatory element-binding protein 2 via the helix-loop-helix-leucine zipper domain is a prerequisite for its nuclear localization mediated by importin beta.</title>
        <authorList>
            <person name="Nagoshi E."/>
            <person name="Yoneda Y."/>
        </authorList>
    </citation>
    <scope>SUBCELLULAR LOCATION</scope>
    <scope>SUBUNIT</scope>
    <scope>MUTAGENESIS OF 369-LEU--LEU-383</scope>
</reference>
<reference evidence="19" key="8">
    <citation type="journal article" date="2002" name="J. Clin. Invest.">
        <title>SREBPs: activators of the complete program of cholesterol and fatty acid synthesis in the liver.</title>
        <authorList>
            <person name="Horton J.D."/>
            <person name="Goldstein J.L."/>
            <person name="Brown M.S."/>
        </authorList>
    </citation>
    <scope>REVIEW</scope>
    <scope>DISRUPTION PHENOTYPE</scope>
</reference>
<reference key="9">
    <citation type="journal article" date="2005" name="J. Clin. Invest.">
        <title>Schoenheimer effect explained--feedback regulation of cholesterol synthesis in mice mediated by Insig proteins.</title>
        <authorList>
            <person name="Engelking L.J."/>
            <person name="Liang G."/>
            <person name="Hammer R.E."/>
            <person name="Takaishi K."/>
            <person name="Kuriyama H."/>
            <person name="Evers B.M."/>
            <person name="Li W.P."/>
            <person name="Horton J.D."/>
            <person name="Goldstein J.L."/>
            <person name="Brown M.S."/>
        </authorList>
    </citation>
    <scope>FUNCTION</scope>
</reference>
<reference key="10">
    <citation type="journal article" date="2011" name="Cell Metab.">
        <title>AMPK phosphorylates and inhibits SREBP activity to attenuate hepatic steatosis and atherosclerosis in diet-induced insulin-resistant mice.</title>
        <authorList>
            <person name="Li Y."/>
            <person name="Xu S."/>
            <person name="Mihaylova M.M."/>
            <person name="Zheng B."/>
            <person name="Hou X."/>
            <person name="Jiang B."/>
            <person name="Park O."/>
            <person name="Luo Z."/>
            <person name="Lefai E."/>
            <person name="Shyy J.Y."/>
            <person name="Gao B."/>
            <person name="Wierzbicki M."/>
            <person name="Verbeuren T.J."/>
            <person name="Shaw R.J."/>
            <person name="Cohen R.A."/>
            <person name="Zang M."/>
        </authorList>
    </citation>
    <scope>PHOSPHORYLATION BY AMPK</scope>
</reference>
<reference key="11">
    <citation type="journal article" date="2015" name="Nat. Commun.">
        <title>PAQR3 modulates cholesterol homeostasis by anchoring Scap/SREBP complex to the Golgi apparatus.</title>
        <authorList>
            <person name="Xu D."/>
            <person name="Wang Z."/>
            <person name="Zhang Y."/>
            <person name="Jiang W."/>
            <person name="Pan Y."/>
            <person name="Song B.L."/>
            <person name="Chen Y."/>
        </authorList>
    </citation>
    <scope>INTERACTION WITH PAQR3</scope>
</reference>
<reference key="12">
    <citation type="journal article" date="2017" name="Elife">
        <title>Inhibition of cholesterol biosynthesis through RNF145-dependent ubiquitination of SCAP.</title>
        <authorList>
            <person name="Zhang L."/>
            <person name="Rajbhandari P."/>
            <person name="Priest C."/>
            <person name="Sandhu J."/>
            <person name="Wu X."/>
            <person name="Temel R."/>
            <person name="Castrillo A."/>
            <person name="de Aguiar Vallim T.Q."/>
            <person name="Sallam T."/>
            <person name="Tontonoz P."/>
        </authorList>
    </citation>
    <scope>SUBCELLULAR LOCATION</scope>
</reference>
<reference key="13">
    <citation type="journal article" date="2017" name="Nat. Rev. Endocrinol.">
        <title>SREBP-regulated lipid metabolism: convergent physiology - divergent pathophysiology.</title>
        <authorList>
            <person name="Shimano H."/>
            <person name="Sato R."/>
        </authorList>
    </citation>
    <scope>REVIEW</scope>
</reference>
<reference key="14">
    <citation type="journal article" date="2023" name="Hepatology">
        <title>Hepatic mitochondrial NAD + transporter SLC25A47 activates AMPKalpha mediating lipid metabolism and tumorigenesis.</title>
        <authorList>
            <person name="Cheng L."/>
            <person name="Deepak R.N.V.K."/>
            <person name="Wang G."/>
            <person name="Meng Z."/>
            <person name="Tao L."/>
            <person name="Xie M."/>
            <person name="Chi W."/>
            <person name="Zhang Y."/>
            <person name="Yang M."/>
            <person name="Liao Y."/>
            <person name="Chen R."/>
            <person name="Liang Y."/>
            <person name="Zhang J."/>
            <person name="Huang Y."/>
            <person name="Wang W."/>
            <person name="Guo Z."/>
            <person name="Wang Y."/>
            <person name="Lin J.D."/>
            <person name="Fan H."/>
            <person name="Chen L."/>
        </authorList>
    </citation>
    <scope>ACTIVITY REGULATION</scope>
</reference>
<dbReference type="EMBL" id="AK155857">
    <property type="protein sequence ID" value="BAE33463.1"/>
    <property type="molecule type" value="mRNA"/>
</dbReference>
<dbReference type="EMBL" id="AC105358">
    <property type="status" value="NOT_ANNOTATED_CDS"/>
    <property type="molecule type" value="Genomic_DNA"/>
</dbReference>
<dbReference type="EMBL" id="AF374267">
    <property type="protein sequence ID" value="AAK54763.1"/>
    <property type="molecule type" value="mRNA"/>
</dbReference>
<dbReference type="EMBL" id="AF289715">
    <property type="protein sequence ID" value="AAG01859.2"/>
    <property type="molecule type" value="mRNA"/>
</dbReference>
<dbReference type="CCDS" id="CCDS27683.1">
    <molecule id="Q3U1N2-1"/>
</dbReference>
<dbReference type="RefSeq" id="NP_150087.1">
    <molecule id="Q3U1N2-1"/>
    <property type="nucleotide sequence ID" value="NM_033218.2"/>
</dbReference>
<dbReference type="SMR" id="Q3U1N2"/>
<dbReference type="BioGRID" id="203496">
    <property type="interactions" value="9"/>
</dbReference>
<dbReference type="FunCoup" id="Q3U1N2">
    <property type="interactions" value="2768"/>
</dbReference>
<dbReference type="IntAct" id="Q3U1N2">
    <property type="interactions" value="3"/>
</dbReference>
<dbReference type="STRING" id="10090.ENSMUSP00000023100"/>
<dbReference type="ChEMBL" id="CHEMBL4630828"/>
<dbReference type="GlyGen" id="Q3U1N2">
    <property type="glycosylation" value="5 sites, 1 O-linked glycan (4 sites)"/>
</dbReference>
<dbReference type="iPTMnet" id="Q3U1N2"/>
<dbReference type="PhosphoSitePlus" id="Q3U1N2"/>
<dbReference type="PaxDb" id="10090-ENSMUSP00000023100"/>
<dbReference type="PeptideAtlas" id="Q3U1N2"/>
<dbReference type="ProteomicsDB" id="261655">
    <molecule id="Q3U1N2-1"/>
</dbReference>
<dbReference type="ProteomicsDB" id="262680">
    <molecule id="Q3U1N2-2"/>
</dbReference>
<dbReference type="Pumba" id="Q3U1N2"/>
<dbReference type="Antibodypedia" id="13093">
    <property type="antibodies" value="380 antibodies from 38 providers"/>
</dbReference>
<dbReference type="DNASU" id="20788"/>
<dbReference type="Ensembl" id="ENSMUST00000023100.8">
    <molecule id="Q3U1N2-1"/>
    <property type="protein sequence ID" value="ENSMUSP00000023100.7"/>
    <property type="gene ID" value="ENSMUSG00000022463.9"/>
</dbReference>
<dbReference type="Ensembl" id="ENSMUST00000229336.2">
    <molecule id="Q3U1N2-2"/>
    <property type="protein sequence ID" value="ENSMUSP00000155022.2"/>
    <property type="gene ID" value="ENSMUSG00000022463.9"/>
</dbReference>
<dbReference type="GeneID" id="20788"/>
<dbReference type="KEGG" id="mmu:20788"/>
<dbReference type="UCSC" id="uc007wyi.1">
    <molecule id="Q3U1N2-1"/>
    <property type="organism name" value="mouse"/>
</dbReference>
<dbReference type="UCSC" id="uc011zwr.1">
    <molecule id="Q3U1N2-2"/>
    <property type="organism name" value="mouse"/>
</dbReference>
<dbReference type="AGR" id="MGI:107585"/>
<dbReference type="CTD" id="6721"/>
<dbReference type="MGI" id="MGI:107585">
    <property type="gene designation" value="Srebf2"/>
</dbReference>
<dbReference type="VEuPathDB" id="HostDB:ENSMUSG00000022463"/>
<dbReference type="eggNOG" id="KOG2588">
    <property type="taxonomic scope" value="Eukaryota"/>
</dbReference>
<dbReference type="GeneTree" id="ENSGT00940000157339"/>
<dbReference type="HOGENOM" id="CLU_008042_0_0_1"/>
<dbReference type="InParanoid" id="Q3U1N2"/>
<dbReference type="OMA" id="QQAVMIT"/>
<dbReference type="OrthoDB" id="2133190at2759"/>
<dbReference type="PhylomeDB" id="Q3U1N2"/>
<dbReference type="TreeFam" id="TF313894"/>
<dbReference type="Reactome" id="R-MMU-1655829">
    <property type="pathway name" value="Regulation of cholesterol biosynthesis by SREBP (SREBF)"/>
</dbReference>
<dbReference type="Reactome" id="R-MMU-191273">
    <property type="pathway name" value="Cholesterol biosynthesis"/>
</dbReference>
<dbReference type="BioGRID-ORCS" id="20788">
    <property type="hits" value="8 hits in 80 CRISPR screens"/>
</dbReference>
<dbReference type="ChiTaRS" id="Srebf2">
    <property type="organism name" value="mouse"/>
</dbReference>
<dbReference type="PRO" id="PR:Q3U1N2"/>
<dbReference type="Proteomes" id="UP000000589">
    <property type="component" value="Chromosome 15"/>
</dbReference>
<dbReference type="RNAct" id="Q3U1N2">
    <property type="molecule type" value="protein"/>
</dbReference>
<dbReference type="Bgee" id="ENSMUSG00000022463">
    <property type="expression patterns" value="Expressed in embryonic brain and 246 other cell types or tissues"/>
</dbReference>
<dbReference type="ExpressionAtlas" id="Q3U1N2">
    <property type="expression patterns" value="baseline and differential"/>
</dbReference>
<dbReference type="GO" id="GO:0005737">
    <property type="term" value="C:cytoplasm"/>
    <property type="evidence" value="ECO:0000314"/>
    <property type="project" value="MGI"/>
</dbReference>
<dbReference type="GO" id="GO:0012507">
    <property type="term" value="C:ER to Golgi transport vesicle membrane"/>
    <property type="evidence" value="ECO:0007669"/>
    <property type="project" value="UniProtKB-SubCell"/>
</dbReference>
<dbReference type="GO" id="GO:0000139">
    <property type="term" value="C:Golgi membrane"/>
    <property type="evidence" value="ECO:0007669"/>
    <property type="project" value="UniProtKB-SubCell"/>
</dbReference>
<dbReference type="GO" id="GO:0016020">
    <property type="term" value="C:membrane"/>
    <property type="evidence" value="ECO:0000314"/>
    <property type="project" value="BHF-UCL"/>
</dbReference>
<dbReference type="GO" id="GO:0005654">
    <property type="term" value="C:nucleoplasm"/>
    <property type="evidence" value="ECO:0000304"/>
    <property type="project" value="Reactome"/>
</dbReference>
<dbReference type="GO" id="GO:0005634">
    <property type="term" value="C:nucleus"/>
    <property type="evidence" value="ECO:0000314"/>
    <property type="project" value="BHF-UCL"/>
</dbReference>
<dbReference type="GO" id="GO:0032937">
    <property type="term" value="C:SREBP-SCAP-Insig complex"/>
    <property type="evidence" value="ECO:0007669"/>
    <property type="project" value="Ensembl"/>
</dbReference>
<dbReference type="GO" id="GO:0003677">
    <property type="term" value="F:DNA binding"/>
    <property type="evidence" value="ECO:0000314"/>
    <property type="project" value="MGI"/>
</dbReference>
<dbReference type="GO" id="GO:0003700">
    <property type="term" value="F:DNA-binding transcription factor activity"/>
    <property type="evidence" value="ECO:0000314"/>
    <property type="project" value="MGI"/>
</dbReference>
<dbReference type="GO" id="GO:0001227">
    <property type="term" value="F:DNA-binding transcription repressor activity, RNA polymerase II-specific"/>
    <property type="evidence" value="ECO:0007669"/>
    <property type="project" value="Ensembl"/>
</dbReference>
<dbReference type="GO" id="GO:0070888">
    <property type="term" value="F:E-box binding"/>
    <property type="evidence" value="ECO:0007669"/>
    <property type="project" value="Ensembl"/>
</dbReference>
<dbReference type="GO" id="GO:0046983">
    <property type="term" value="F:protein dimerization activity"/>
    <property type="evidence" value="ECO:0007669"/>
    <property type="project" value="InterPro"/>
</dbReference>
<dbReference type="GO" id="GO:0043565">
    <property type="term" value="F:sequence-specific DNA binding"/>
    <property type="evidence" value="ECO:0000266"/>
    <property type="project" value="MGI"/>
</dbReference>
<dbReference type="GO" id="GO:0000976">
    <property type="term" value="F:transcription cis-regulatory region binding"/>
    <property type="evidence" value="ECO:0000314"/>
    <property type="project" value="MGI"/>
</dbReference>
<dbReference type="GO" id="GO:0071404">
    <property type="term" value="P:cellular response to low-density lipoprotein particle stimulus"/>
    <property type="evidence" value="ECO:0007669"/>
    <property type="project" value="Ensembl"/>
</dbReference>
<dbReference type="GO" id="GO:0009267">
    <property type="term" value="P:cellular response to starvation"/>
    <property type="evidence" value="ECO:0007669"/>
    <property type="project" value="Ensembl"/>
</dbReference>
<dbReference type="GO" id="GO:0042632">
    <property type="term" value="P:cholesterol homeostasis"/>
    <property type="evidence" value="ECO:0000316"/>
    <property type="project" value="MGI"/>
</dbReference>
<dbReference type="GO" id="GO:0008203">
    <property type="term" value="P:cholesterol metabolic process"/>
    <property type="evidence" value="ECO:0007669"/>
    <property type="project" value="UniProtKB-KW"/>
</dbReference>
<dbReference type="GO" id="GO:0090370">
    <property type="term" value="P:negative regulation of cholesterol efflux"/>
    <property type="evidence" value="ECO:0007669"/>
    <property type="project" value="Ensembl"/>
</dbReference>
<dbReference type="GO" id="GO:0045542">
    <property type="term" value="P:positive regulation of cholesterol biosynthetic process"/>
    <property type="evidence" value="ECO:0007669"/>
    <property type="project" value="Ensembl"/>
</dbReference>
<dbReference type="GO" id="GO:0010886">
    <property type="term" value="P:positive regulation of cholesterol storage"/>
    <property type="evidence" value="ECO:0007669"/>
    <property type="project" value="Ensembl"/>
</dbReference>
<dbReference type="GO" id="GO:1902895">
    <property type="term" value="P:positive regulation of miRNA transcription"/>
    <property type="evidence" value="ECO:0000314"/>
    <property type="project" value="BHF-UCL"/>
</dbReference>
<dbReference type="GO" id="GO:0045944">
    <property type="term" value="P:positive regulation of transcription by RNA polymerase II"/>
    <property type="evidence" value="ECO:0000314"/>
    <property type="project" value="MGI"/>
</dbReference>
<dbReference type="GO" id="GO:0006355">
    <property type="term" value="P:regulation of DNA-templated transcription"/>
    <property type="evidence" value="ECO:0000314"/>
    <property type="project" value="MGI"/>
</dbReference>
<dbReference type="GO" id="GO:0008593">
    <property type="term" value="P:regulation of Notch signaling pathway"/>
    <property type="evidence" value="ECO:0000250"/>
    <property type="project" value="UniProtKB"/>
</dbReference>
<dbReference type="GO" id="GO:0032933">
    <property type="term" value="P:SREBP signaling pathway"/>
    <property type="evidence" value="ECO:0007669"/>
    <property type="project" value="Ensembl"/>
</dbReference>
<dbReference type="CDD" id="cd18922">
    <property type="entry name" value="bHLHzip_SREBP2"/>
    <property type="match status" value="1"/>
</dbReference>
<dbReference type="FunFam" id="4.10.280.10:FF:000016">
    <property type="entry name" value="Sterol regulatory element-binding transcription factor 1"/>
    <property type="match status" value="1"/>
</dbReference>
<dbReference type="Gene3D" id="4.10.280.10">
    <property type="entry name" value="Helix-loop-helix DNA-binding domain"/>
    <property type="match status" value="1"/>
</dbReference>
<dbReference type="InterPro" id="IPR011598">
    <property type="entry name" value="bHLH_dom"/>
</dbReference>
<dbReference type="InterPro" id="IPR036638">
    <property type="entry name" value="HLH_DNA-bd_sf"/>
</dbReference>
<dbReference type="InterPro" id="IPR003006">
    <property type="entry name" value="Ig/MHC_CS"/>
</dbReference>
<dbReference type="PANTHER" id="PTHR46062">
    <property type="entry name" value="STEROL REGULATORY ELEMENT-BINDING PROTEIN"/>
    <property type="match status" value="1"/>
</dbReference>
<dbReference type="PANTHER" id="PTHR46062:SF3">
    <property type="entry name" value="STEROL REGULATORY ELEMENT-BINDING PROTEIN 2"/>
    <property type="match status" value="1"/>
</dbReference>
<dbReference type="Pfam" id="PF00010">
    <property type="entry name" value="HLH"/>
    <property type="match status" value="1"/>
</dbReference>
<dbReference type="SMART" id="SM00353">
    <property type="entry name" value="HLH"/>
    <property type="match status" value="1"/>
</dbReference>
<dbReference type="SUPFAM" id="SSF47459">
    <property type="entry name" value="HLH, helix-loop-helix DNA-binding domain"/>
    <property type="match status" value="1"/>
</dbReference>
<dbReference type="PROSITE" id="PS50888">
    <property type="entry name" value="BHLH"/>
    <property type="match status" value="1"/>
</dbReference>
<proteinExistence type="evidence at protein level"/>
<keyword id="KW-0010">Activator</keyword>
<keyword id="KW-0025">Alternative splicing</keyword>
<keyword id="KW-0153">Cholesterol metabolism</keyword>
<keyword id="KW-0968">Cytoplasmic vesicle</keyword>
<keyword id="KW-0238">DNA-binding</keyword>
<keyword id="KW-0256">Endoplasmic reticulum</keyword>
<keyword id="KW-0333">Golgi apparatus</keyword>
<keyword id="KW-1017">Isopeptide bond</keyword>
<keyword id="KW-0443">Lipid metabolism</keyword>
<keyword id="KW-0472">Membrane</keyword>
<keyword id="KW-0539">Nucleus</keyword>
<keyword id="KW-0597">Phosphoprotein</keyword>
<keyword id="KW-1185">Reference proteome</keyword>
<keyword id="KW-0753">Steroid metabolism</keyword>
<keyword id="KW-1207">Sterol metabolism</keyword>
<keyword id="KW-0804">Transcription</keyword>
<keyword id="KW-0805">Transcription regulation</keyword>
<keyword id="KW-0812">Transmembrane</keyword>
<keyword id="KW-1133">Transmembrane helix</keyword>
<keyword id="KW-0832">Ubl conjugation</keyword>
<comment type="function">
    <molecule>Sterol regulatory element-binding protein 2</molecule>
    <text evidence="2 10 15">Precursor of the transcription factor form (Processed sterol regulatory element-binding protein 2), which is embedded in the endoplasmic reticulum membrane (By similarity). Low sterol concentrations promote processing of this form, releasing the transcription factor form that translocates into the nucleus and activates transcription of genes involved in cholesterol biosynthesis (PubMed:16100574, PubMed:9616204).</text>
</comment>
<comment type="function">
    <molecule>Processed sterol regulatory element-binding protein 2</molecule>
    <text evidence="2 15">Key transcription factor that regulates expression of genes involved in cholesterol biosynthesis (PubMed:9616204). Binds to the sterol regulatory element 1 (SRE-1) (5'-ATCACCCCAC-3'). Has dual sequence specificity binding to both an E-box motif (5'-ATCACGTGA-3') and to SRE-1 (5'-ATCACCCCAC-3') (By similarity). Regulates transcription of genes related to cholesterol synthesis pathway (PubMed:9616204).</text>
</comment>
<comment type="activity regulation">
    <text evidence="14">Activation by cleavage is down-regulated upon activation of SIRT3-dependent PRKAA1/AMPK-alpha signaling cascade which leads to inhibition of ATP-consuming lipogenesis to restore cellular energy balance.</text>
</comment>
<comment type="subunit">
    <molecule>Sterol regulatory element-binding protein 2</molecule>
    <text evidence="2 12">Forms a tight complex with SCAP, the SCAP-SREBP complex, in the endoplasmic reticulum membrane and the Golgi apparatus (By similarity). Interacts with PAQR3; the interaction anchors the SCAP-SREBP complex to the Golgi apparatus in low cholesterol conditions (PubMed:26311497). Interacts (via C-terminal domain) with RNF139.</text>
</comment>
<comment type="subunit">
    <molecule>Processed sterol regulatory element-binding protein 2</molecule>
    <text evidence="7 8">Homodimer; efficient DNA binding of the soluble transcription factor fragment requires dimerization with another bHLH protein (PubMed:11283257). Interacts with LMNA (PubMed:11929849).</text>
</comment>
<comment type="interaction">
    <interactant intactId="EBI-645275">
        <id>Q3U1N2</id>
    </interactant>
    <interactant intactId="EBI-493266">
        <id>Q9JM73</id>
        <label>Srf</label>
    </interactant>
    <organismsDiffer>false</organismsDiffer>
    <experiments>3</experiments>
</comment>
<comment type="subcellular location">
    <subcellularLocation>
        <location evidence="2">Endoplasmic reticulum membrane</location>
        <topology evidence="3">Multi-pass membrane protein</topology>
    </subcellularLocation>
    <subcellularLocation>
        <location evidence="17">Golgi apparatus membrane</location>
        <topology evidence="3">Multi-pass membrane protein</topology>
    </subcellularLocation>
    <subcellularLocation>
        <location evidence="17">Cytoplasmic vesicle</location>
        <location evidence="17">COPII-coated vesicle membrane</location>
        <topology evidence="3">Multi-pass membrane protein</topology>
    </subcellularLocation>
    <text evidence="2">At high sterol concentrations, the SCAP-SREBP is retained in the endoplasmic reticulum (By similarity). Low sterol concentrations promote recruitment into COPII-coated vesicles and transport of the SCAP-SREBP to the Golgi, where it is processed (By similarity).</text>
</comment>
<comment type="subcellular location">
    <molecule>Processed sterol regulatory element-binding protein 2</molecule>
    <subcellularLocation>
        <location evidence="6 7 13">Nucleus</location>
    </subcellularLocation>
    <text evidence="6 7">Transported into the nucleus with the help of importin-beta (PubMed:10397761, PubMed:11283257). Dimerization of the bHLH domain is a prerequisite for importin beta-dependent nuclear import (PubMed:10397761, PubMed:11283257).</text>
</comment>
<comment type="alternative products">
    <event type="alternative splicing"/>
    <isoform>
        <id>Q3U1N2-1</id>
        <name>1</name>
        <sequence type="displayed"/>
    </isoform>
    <isoform>
        <id>Q3U1N2-2</id>
        <name>2</name>
        <sequence type="described" ref="VSP_052658 VSP_052659"/>
    </isoform>
</comment>
<comment type="PTM">
    <molecule>Sterol regulatory element-binding protein 2</molecule>
    <text evidence="2">Processed in the Golgi apparatus, releasing the protein from the membrane. At low cholesterol the SCAP-SREBP complex is recruited into COPII vesicles for export from the endoplasmic reticulum. In the Golgi, complex SREBPs are cleaved sequentially by site-1 (MBTPS1, S1P) and site-2 (MBTPS2, S2P) proteases. The first cleavage by site-1 protease occurs within the luminal loop, the second cleavage by site-2 protease occurs within the first transmembrane domain, releasing the transcription factor from the Golgi membrane. Apoptosis triggers cleavage by the cysteine proteases caspase-3 and caspase-7. Cleavage and activation is induced by mediated cholesterol efflux.</text>
</comment>
<comment type="PTM">
    <text evidence="11">Phosphorylated by AMPK, leading to suppress protein processing and nuclear translocation, and repress target gene expression.</text>
</comment>
<comment type="PTM">
    <molecule>Sterol regulatory element-binding protein 2</molecule>
    <text evidence="2">SCAP-free SREBF2 is ubiquitinated by the BCR(ARMC5) complex, leading to its degradation.</text>
</comment>
<comment type="PTM">
    <molecule>Processed sterol regulatory element-binding protein 2</molecule>
    <text evidence="2">Ubiquitinated; the nuclear form has a rapid turnover and is rapidly ubiquitinated and degraded by the proteasome in the nucleus.</text>
</comment>
<comment type="disruption phenotype">
    <text evidence="9">Death around embryonic day 7-8.</text>
</comment>
<comment type="similarity">
    <text evidence="19">Belongs to the SREBP family.</text>
</comment>
<evidence type="ECO:0000250" key="1">
    <source>
        <dbReference type="UniProtKB" id="P36956"/>
    </source>
</evidence>
<evidence type="ECO:0000250" key="2">
    <source>
        <dbReference type="UniProtKB" id="Q12772"/>
    </source>
</evidence>
<evidence type="ECO:0000255" key="3"/>
<evidence type="ECO:0000255" key="4">
    <source>
        <dbReference type="PROSITE-ProRule" id="PRU00981"/>
    </source>
</evidence>
<evidence type="ECO:0000256" key="5">
    <source>
        <dbReference type="SAM" id="MobiDB-lite"/>
    </source>
</evidence>
<evidence type="ECO:0000269" key="6">
    <source>
    </source>
</evidence>
<evidence type="ECO:0000269" key="7">
    <source>
    </source>
</evidence>
<evidence type="ECO:0000269" key="8">
    <source>
    </source>
</evidence>
<evidence type="ECO:0000269" key="9">
    <source>
    </source>
</evidence>
<evidence type="ECO:0000269" key="10">
    <source>
    </source>
</evidence>
<evidence type="ECO:0000269" key="11">
    <source>
    </source>
</evidence>
<evidence type="ECO:0000269" key="12">
    <source>
    </source>
</evidence>
<evidence type="ECO:0000269" key="13">
    <source>
    </source>
</evidence>
<evidence type="ECO:0000269" key="14">
    <source>
    </source>
</evidence>
<evidence type="ECO:0000269" key="15">
    <source>
    </source>
</evidence>
<evidence type="ECO:0000303" key="16">
    <source>
    </source>
</evidence>
<evidence type="ECO:0000303" key="17">
    <source>
    </source>
</evidence>
<evidence type="ECO:0000303" key="18">
    <source>
    </source>
</evidence>
<evidence type="ECO:0000305" key="19"/>
<evidence type="ECO:0000312" key="20">
    <source>
        <dbReference type="EMBL" id="BAE33463.1"/>
    </source>
</evidence>
<evidence type="ECO:0000312" key="21">
    <source>
        <dbReference type="MGI" id="MGI:107585"/>
    </source>
</evidence>
<gene>
    <name evidence="21" type="primary">Srebf2</name>
    <name evidence="18" type="synonym">Srebp2</name>
</gene>
<name>SRBP2_MOUSE</name>